<feature type="signal peptide" evidence="4">
    <location>
        <begin position="1"/>
        <end position="23"/>
    </location>
</feature>
<feature type="chain" id="PRO_0000227500" description="Interleukin-17A">
    <location>
        <begin position="24"/>
        <end position="153"/>
    </location>
</feature>
<feature type="region of interest" description="Disordered" evidence="5">
    <location>
        <begin position="56"/>
        <end position="76"/>
    </location>
</feature>
<feature type="glycosylation site" description="N-linked (GlcNAc...) asparagine" evidence="4">
    <location>
        <position position="53"/>
    </location>
</feature>
<feature type="disulfide bond" evidence="1">
    <location>
        <begin position="92"/>
        <end position="142"/>
    </location>
</feature>
<feature type="disulfide bond" evidence="1">
    <location>
        <begin position="97"/>
        <end position="144"/>
    </location>
</feature>
<evidence type="ECO:0000250" key="1"/>
<evidence type="ECO:0000250" key="2">
    <source>
        <dbReference type="UniProtKB" id="Q16552"/>
    </source>
</evidence>
<evidence type="ECO:0000250" key="3">
    <source>
        <dbReference type="UniProtKB" id="Q62386"/>
    </source>
</evidence>
<evidence type="ECO:0000255" key="4"/>
<evidence type="ECO:0000256" key="5">
    <source>
        <dbReference type="SAM" id="MobiDB-lite"/>
    </source>
</evidence>
<evidence type="ECO:0000305" key="6"/>
<comment type="function">
    <text evidence="3">Effector cytokine of innate and adaptive immune system involved in antimicrobial host defense and maintenance of tissue integrity. Signals via IL17RA-IL17RC heterodimeric receptor complex, triggering homotypic interaction of IL17RA and IL17RC chains with TRAF3IP2 adapter. This leads to downstream TRAF6-mediated activation of NF-kappa-B and MAPkinase pathways ultimately resulting in transcriptional activation of cytokines, chemokines, antimicrobial peptides and matrix metalloproteinases, with potential strong immune inflammation. Plays an important role in connecting T cell-mediated adaptive immunity and acute inflammatory response to destroy extracellular bacteria and fungi. As a signature effector cytokine of T-helper 17 cells (Th17), primarily induces neutrophil activation and recruitment at infection and inflammatory sites. In airway epithelium, mediates neutrophil chemotaxis via induction of CXCL1 and CXCL5 chemokines. In secondary lymphoid organs, contributes to germinal center formation by regulating the chemotactic response of B cells to CXCL12 and CXCL13, enhancing retention of B cells within the germinal centers, B cell somatic hypermutation rate and selection toward plasma cells. Effector cytokine of a subset of gamma-delta T cells that functions as part of an inflammatory circuit downstream IL1B, TLR2 and IL23A-IL12B to promote neutrophil recruitment for efficient bacterial clearance. Effector cytokine of innate immune cells including invariant natural killer cell (iNKT) and group 3 innate lymphoid cells that mediate initial neutrophilic inflammation. Involved in the maintenance of the integrity of epithelial barriers during homeostasis and pathogen infection. Upon acute injury, has a direct role in epithelial barrier formation by regulating OCLN localization and tight junction biogenesis. As part of the mucosal immune response induced by commensal bacteria, enhances host's ability to resist pathogenic bacterial and fungal infections by promoting neutrophil recruitment and antimicrobial peptides release. In synergy with IL17F, mediates the production of antimicrobial beta-defensins DEFB1, DEFB103A, and DEFB104A by mucosal epithelial cells, limiting the entry of microbes through the epithelial barriers. Involved in antiviral host defense through various mechanisms. Enhances immunity against West Nile virus by promoting T cell cytotoxicity. May play a beneficial role in influenza A virus (H5N1) infection by enhancing B cell recruitment and immune response in the lung. Contributes to influenza A virus (H1N1) clearance by driving the differentiation of B-1a B cells, providing for production of virus-specific IgM antibodies at first line of host defense.</text>
</comment>
<comment type="subunit">
    <text evidence="2">Homodimer. Forms complexes with IL17RA and IL17RC receptors with 2:1 binding stoichiometry: two receptor chains for one interleukin molecule. IL17A homodimer preferentially drives the formation of IL17RA-IL17RC heterodimeric receptor complex. IL17A homodimer adopts an asymmetrical ternary structure with one IL17RA molecule, allowing for high affinity interactions of one IL17A monomer with one IL17RA molecule (via D1 and D2 domains), while disfavoring binding of a second IL17RA molecule on the other IL17A monomer. Heterodimer with IL17F. IL17A-IL17F forms complexes with IL17RA-IL17RC, but with lower affinity when compared to IL17A homodimer. IL17RA and IL17RC chains cannot distinguish between IL17A and IL17F molecules, potentially enabling the formation of topologically distinct complexes.</text>
</comment>
<comment type="subcellular location">
    <subcellularLocation>
        <location evidence="3">Secreted</location>
    </subcellularLocation>
</comment>
<comment type="similarity">
    <text evidence="6">Belongs to the IL-17 family.</text>
</comment>
<accession>Q687Y7</accession>
<accession>Q95L56</accession>
<protein>
    <recommendedName>
        <fullName>Interleukin-17A</fullName>
        <shortName>IL-17</shortName>
        <shortName>IL-17A</shortName>
    </recommendedName>
</protein>
<sequence>MASMRTSSMSLLLLLSLVALVKAGVIIPQSPGCPPTEDKNFPQHVRVNLNIVNRSTNSRRPTDYHKRSTSPWTLHRNEDPERYPSVIWEAKCSHSGCINAEGKVDHHMNSVTIQQEILVLRRESQHCPHSFRLEKMLVAVGCTCVTPIVRHLA</sequence>
<organism>
    <name type="scientific">Bos taurus</name>
    <name type="common">Bovine</name>
    <dbReference type="NCBI Taxonomy" id="9913"/>
    <lineage>
        <taxon>Eukaryota</taxon>
        <taxon>Metazoa</taxon>
        <taxon>Chordata</taxon>
        <taxon>Craniata</taxon>
        <taxon>Vertebrata</taxon>
        <taxon>Euteleostomi</taxon>
        <taxon>Mammalia</taxon>
        <taxon>Eutheria</taxon>
        <taxon>Laurasiatheria</taxon>
        <taxon>Artiodactyla</taxon>
        <taxon>Ruminantia</taxon>
        <taxon>Pecora</taxon>
        <taxon>Bovidae</taxon>
        <taxon>Bovinae</taxon>
        <taxon>Bos</taxon>
    </lineage>
</organism>
<dbReference type="EMBL" id="AF412040">
    <property type="protein sequence ID" value="AAQ03220.1"/>
    <property type="molecule type" value="mRNA"/>
</dbReference>
<dbReference type="EMBL" id="AF416586">
    <property type="protein sequence ID" value="AAL08013.1"/>
    <property type="molecule type" value="mRNA"/>
</dbReference>
<dbReference type="RefSeq" id="NP_001008412.1">
    <property type="nucleotide sequence ID" value="NM_001008412.2"/>
</dbReference>
<dbReference type="SMR" id="Q687Y7"/>
<dbReference type="FunCoup" id="Q687Y7">
    <property type="interactions" value="78"/>
</dbReference>
<dbReference type="STRING" id="9913.ENSBTAP00000002786"/>
<dbReference type="GlyCosmos" id="Q687Y7">
    <property type="glycosylation" value="1 site, No reported glycans"/>
</dbReference>
<dbReference type="GlyGen" id="Q687Y7">
    <property type="glycosylation" value="1 site"/>
</dbReference>
<dbReference type="PaxDb" id="9913-ENSBTAP00000002786"/>
<dbReference type="Ensembl" id="ENSBTAT00000002786.4">
    <property type="protein sequence ID" value="ENSBTAP00000002786.3"/>
    <property type="gene ID" value="ENSBTAG00000002150.4"/>
</dbReference>
<dbReference type="GeneID" id="282863"/>
<dbReference type="KEGG" id="bta:282863"/>
<dbReference type="CTD" id="3605"/>
<dbReference type="VEuPathDB" id="HostDB:ENSBTAG00000002150"/>
<dbReference type="VGNC" id="VGNC:30117">
    <property type="gene designation" value="IL17A"/>
</dbReference>
<dbReference type="eggNOG" id="ENOG502S5A0">
    <property type="taxonomic scope" value="Eukaryota"/>
</dbReference>
<dbReference type="GeneTree" id="ENSGT00940000161882"/>
<dbReference type="HOGENOM" id="CLU_118641_0_0_1"/>
<dbReference type="InParanoid" id="Q687Y7"/>
<dbReference type="OMA" id="HHMNSVP"/>
<dbReference type="OrthoDB" id="6093351at2759"/>
<dbReference type="TreeFam" id="TF314701"/>
<dbReference type="Proteomes" id="UP000009136">
    <property type="component" value="Chromosome 23"/>
</dbReference>
<dbReference type="Bgee" id="ENSBTAG00000002150">
    <property type="expression patterns" value="Expressed in pharyngeal tonsil and 16 other cell types or tissues"/>
</dbReference>
<dbReference type="GO" id="GO:0009897">
    <property type="term" value="C:external side of plasma membrane"/>
    <property type="evidence" value="ECO:0007669"/>
    <property type="project" value="Ensembl"/>
</dbReference>
<dbReference type="GO" id="GO:0005615">
    <property type="term" value="C:extracellular space"/>
    <property type="evidence" value="ECO:0007669"/>
    <property type="project" value="UniProtKB-KW"/>
</dbReference>
<dbReference type="GO" id="GO:0005125">
    <property type="term" value="F:cytokine activity"/>
    <property type="evidence" value="ECO:0007669"/>
    <property type="project" value="UniProtKB-KW"/>
</dbReference>
<dbReference type="GO" id="GO:0046982">
    <property type="term" value="F:protein heterodimerization activity"/>
    <property type="evidence" value="ECO:0007669"/>
    <property type="project" value="Ensembl"/>
</dbReference>
<dbReference type="GO" id="GO:0042803">
    <property type="term" value="F:protein homodimerization activity"/>
    <property type="evidence" value="ECO:0007669"/>
    <property type="project" value="Ensembl"/>
</dbReference>
<dbReference type="GO" id="GO:0002250">
    <property type="term" value="P:adaptive immune response"/>
    <property type="evidence" value="ECO:0007669"/>
    <property type="project" value="UniProtKB-KW"/>
</dbReference>
<dbReference type="GO" id="GO:0071347">
    <property type="term" value="P:cellular response to interleukin-1"/>
    <property type="evidence" value="ECO:0007669"/>
    <property type="project" value="Ensembl"/>
</dbReference>
<dbReference type="GO" id="GO:0050832">
    <property type="term" value="P:defense response to fungus"/>
    <property type="evidence" value="ECO:0007669"/>
    <property type="project" value="Ensembl"/>
</dbReference>
<dbReference type="GO" id="GO:0050829">
    <property type="term" value="P:defense response to Gram-negative bacterium"/>
    <property type="evidence" value="ECO:0007669"/>
    <property type="project" value="Ensembl"/>
</dbReference>
<dbReference type="GO" id="GO:0050830">
    <property type="term" value="P:defense response to Gram-positive bacterium"/>
    <property type="evidence" value="ECO:0007669"/>
    <property type="project" value="Ensembl"/>
</dbReference>
<dbReference type="GO" id="GO:0072537">
    <property type="term" value="P:fibroblast activation"/>
    <property type="evidence" value="ECO:0007669"/>
    <property type="project" value="Ensembl"/>
</dbReference>
<dbReference type="GO" id="GO:0010467">
    <property type="term" value="P:gene expression"/>
    <property type="evidence" value="ECO:0007669"/>
    <property type="project" value="Ensembl"/>
</dbReference>
<dbReference type="GO" id="GO:0097530">
    <property type="term" value="P:granulocyte migration"/>
    <property type="evidence" value="ECO:0007669"/>
    <property type="project" value="Ensembl"/>
</dbReference>
<dbReference type="GO" id="GO:0006954">
    <property type="term" value="P:inflammatory response"/>
    <property type="evidence" value="ECO:0007669"/>
    <property type="project" value="UniProtKB-KW"/>
</dbReference>
<dbReference type="GO" id="GO:0045087">
    <property type="term" value="P:innate immune response"/>
    <property type="evidence" value="ECO:0007669"/>
    <property type="project" value="UniProtKB-KW"/>
</dbReference>
<dbReference type="GO" id="GO:0097400">
    <property type="term" value="P:interleukin-17-mediated signaling pathway"/>
    <property type="evidence" value="ECO:0007669"/>
    <property type="project" value="Ensembl"/>
</dbReference>
<dbReference type="GO" id="GO:0038173">
    <property type="term" value="P:interleukin-17A-mediated signaling pathway"/>
    <property type="evidence" value="ECO:0007669"/>
    <property type="project" value="Ensembl"/>
</dbReference>
<dbReference type="GO" id="GO:0060729">
    <property type="term" value="P:intestinal epithelial structure maintenance"/>
    <property type="evidence" value="ECO:0007669"/>
    <property type="project" value="Ensembl"/>
</dbReference>
<dbReference type="GO" id="GO:0030216">
    <property type="term" value="P:keratinocyte differentiation"/>
    <property type="evidence" value="ECO:0007669"/>
    <property type="project" value="Ensembl"/>
</dbReference>
<dbReference type="GO" id="GO:0043616">
    <property type="term" value="P:keratinocyte proliferation"/>
    <property type="evidence" value="ECO:0007669"/>
    <property type="project" value="Ensembl"/>
</dbReference>
<dbReference type="GO" id="GO:0106015">
    <property type="term" value="P:negative regulation of inflammatory response to wounding"/>
    <property type="evidence" value="ECO:0007669"/>
    <property type="project" value="Ensembl"/>
</dbReference>
<dbReference type="GO" id="GO:0007219">
    <property type="term" value="P:Notch signaling pathway"/>
    <property type="evidence" value="ECO:0007669"/>
    <property type="project" value="Ensembl"/>
</dbReference>
<dbReference type="GO" id="GO:0002225">
    <property type="term" value="P:positive regulation of antimicrobial peptide production"/>
    <property type="evidence" value="ECO:0007669"/>
    <property type="project" value="Ensembl"/>
</dbReference>
<dbReference type="GO" id="GO:1903348">
    <property type="term" value="P:positive regulation of bicellular tight junction assembly"/>
    <property type="evidence" value="ECO:0007669"/>
    <property type="project" value="Ensembl"/>
</dbReference>
<dbReference type="GO" id="GO:2000340">
    <property type="term" value="P:positive regulation of chemokine (C-X-C motif) ligand 1 production"/>
    <property type="evidence" value="ECO:0007669"/>
    <property type="project" value="Ensembl"/>
</dbReference>
<dbReference type="GO" id="GO:1900017">
    <property type="term" value="P:positive regulation of cytokine production involved in inflammatory response"/>
    <property type="evidence" value="ECO:0007669"/>
    <property type="project" value="Ensembl"/>
</dbReference>
<dbReference type="GO" id="GO:0032731">
    <property type="term" value="P:positive regulation of interleukin-1 beta production"/>
    <property type="evidence" value="ECO:0007669"/>
    <property type="project" value="Ensembl"/>
</dbReference>
<dbReference type="GO" id="GO:0032735">
    <property type="term" value="P:positive regulation of interleukin-12 production"/>
    <property type="evidence" value="ECO:0007669"/>
    <property type="project" value="Ensembl"/>
</dbReference>
<dbReference type="GO" id="GO:0032739">
    <property type="term" value="P:positive regulation of interleukin-16 production"/>
    <property type="evidence" value="ECO:0007669"/>
    <property type="project" value="Ensembl"/>
</dbReference>
<dbReference type="GO" id="GO:0032747">
    <property type="term" value="P:positive regulation of interleukin-23 production"/>
    <property type="evidence" value="ECO:0007669"/>
    <property type="project" value="Ensembl"/>
</dbReference>
<dbReference type="GO" id="GO:0032755">
    <property type="term" value="P:positive regulation of interleukin-6 production"/>
    <property type="evidence" value="ECO:0007669"/>
    <property type="project" value="Ensembl"/>
</dbReference>
<dbReference type="GO" id="GO:0045672">
    <property type="term" value="P:positive regulation of osteoclast differentiation"/>
    <property type="evidence" value="ECO:0007669"/>
    <property type="project" value="Ensembl"/>
</dbReference>
<dbReference type="GO" id="GO:0045944">
    <property type="term" value="P:positive regulation of transcription by RNA polymerase II"/>
    <property type="evidence" value="ECO:0007669"/>
    <property type="project" value="Ensembl"/>
</dbReference>
<dbReference type="GO" id="GO:0032760">
    <property type="term" value="P:positive regulation of tumor necrosis factor production"/>
    <property type="evidence" value="ECO:0007669"/>
    <property type="project" value="Ensembl"/>
</dbReference>
<dbReference type="GO" id="GO:0009611">
    <property type="term" value="P:response to wounding"/>
    <property type="evidence" value="ECO:0007669"/>
    <property type="project" value="Ensembl"/>
</dbReference>
<dbReference type="FunFam" id="2.10.90.10:FF:000038">
    <property type="entry name" value="Interleukin-17A"/>
    <property type="match status" value="1"/>
</dbReference>
<dbReference type="Gene3D" id="2.10.90.10">
    <property type="entry name" value="Cystine-knot cytokines"/>
    <property type="match status" value="1"/>
</dbReference>
<dbReference type="InterPro" id="IPR029034">
    <property type="entry name" value="Cystine-knot_cytokine"/>
</dbReference>
<dbReference type="InterPro" id="IPR020440">
    <property type="entry name" value="IL-17_chr"/>
</dbReference>
<dbReference type="InterPro" id="IPR010345">
    <property type="entry name" value="IL-17_fam"/>
</dbReference>
<dbReference type="Pfam" id="PF06083">
    <property type="entry name" value="IL17"/>
    <property type="match status" value="1"/>
</dbReference>
<dbReference type="PRINTS" id="PR01932">
    <property type="entry name" value="INTRLEUKIN17"/>
</dbReference>
<dbReference type="SUPFAM" id="SSF57501">
    <property type="entry name" value="Cystine-knot cytokines"/>
    <property type="match status" value="1"/>
</dbReference>
<gene>
    <name type="primary">IL17A</name>
</gene>
<name>IL17_BOVIN</name>
<reference key="1">
    <citation type="submission" date="2001-08" db="EMBL/GenBank/DDBJ databases">
        <title>Neutrophil recruitment in the bovine mammary gland.</title>
        <authorList>
            <person name="Riollet C."/>
            <person name="Rainard P."/>
        </authorList>
    </citation>
    <scope>NUCLEOTIDE SEQUENCE [MRNA]</scope>
</reference>
<reference key="2">
    <citation type="submission" date="2001-09" db="EMBL/GenBank/DDBJ databases">
        <authorList>
            <person name="Lee I.-K."/>
            <person name="Mwangi S.M."/>
            <person name="Olsen S."/>
            <person name="Kehrli M. Jr."/>
        </authorList>
    </citation>
    <scope>NUCLEOTIDE SEQUENCE [MRNA] OF 13-153</scope>
</reference>
<keyword id="KW-1064">Adaptive immunity</keyword>
<keyword id="KW-0202">Cytokine</keyword>
<keyword id="KW-1015">Disulfide bond</keyword>
<keyword id="KW-0325">Glycoprotein</keyword>
<keyword id="KW-0391">Immunity</keyword>
<keyword id="KW-0395">Inflammatory response</keyword>
<keyword id="KW-0399">Innate immunity</keyword>
<keyword id="KW-1185">Reference proteome</keyword>
<keyword id="KW-0964">Secreted</keyword>
<keyword id="KW-0732">Signal</keyword>
<proteinExistence type="evidence at transcript level"/>